<evidence type="ECO:0000250" key="1"/>
<evidence type="ECO:0000250" key="2">
    <source>
        <dbReference type="UniProtKB" id="P01356"/>
    </source>
</evidence>
<evidence type="ECO:0000250" key="3">
    <source>
        <dbReference type="UniProtKB" id="P06307"/>
    </source>
</evidence>
<evidence type="ECO:0000250" key="4">
    <source>
        <dbReference type="UniProtKB" id="Q9TS44"/>
    </source>
</evidence>
<evidence type="ECO:0000255" key="5"/>
<evidence type="ECO:0000256" key="6">
    <source>
        <dbReference type="SAM" id="MobiDB-lite"/>
    </source>
</evidence>
<evidence type="ECO:0000305" key="7"/>
<accession>P23362</accession>
<accession>Q4R5N2</accession>
<protein>
    <recommendedName>
        <fullName>Cholecystokinin</fullName>
        <shortName>CCK</shortName>
    </recommendedName>
    <component>
        <recommendedName>
            <fullName>Cholecystokinin-58</fullName>
            <shortName>CCK58</shortName>
        </recommendedName>
    </component>
    <component>
        <recommendedName>
            <fullName>Cholecystokinin-58 desnonopeptide</fullName>
        </recommendedName>
        <alternativeName>
            <fullName>(1-49)-CCK58</fullName>
        </alternativeName>
    </component>
    <component>
        <recommendedName>
            <fullName>Cholecystokinin-39</fullName>
            <shortName>CCK39</shortName>
        </recommendedName>
    </component>
    <component>
        <recommendedName>
            <fullName>Cholecystokinin-33</fullName>
            <shortName>CCK33</shortName>
        </recommendedName>
    </component>
    <component>
        <recommendedName>
            <fullName>Cholecystokinin-25</fullName>
            <shortName>CCK25</shortName>
        </recommendedName>
    </component>
    <component>
        <recommendedName>
            <fullName>Cholecystokinin-18</fullName>
            <shortName>CCK18</shortName>
        </recommendedName>
    </component>
    <component>
        <recommendedName>
            <fullName>Cholecystokinin-12</fullName>
            <shortName>CCK12</shortName>
        </recommendedName>
    </component>
    <component>
        <recommendedName>
            <fullName>Cholecystokinin-8</fullName>
            <shortName>CCK8</shortName>
        </recommendedName>
    </component>
    <component>
        <recommendedName>
            <fullName>Cholecystokinin-7</fullName>
            <shortName>CCK7</shortName>
        </recommendedName>
    </component>
    <component>
        <recommendedName>
            <fullName>Cholecystokinin-5</fullName>
            <shortName>CCK5</shortName>
        </recommendedName>
    </component>
</protein>
<name>CCKN_MACFA</name>
<feature type="signal peptide" evidence="5">
    <location>
        <begin position="1"/>
        <end position="20"/>
    </location>
</feature>
<feature type="chain" id="PRO_0000010544" description="Cholecystokinin">
    <location>
        <begin position="21"/>
        <end position="115"/>
    </location>
</feature>
<feature type="propeptide" id="PRO_0000010545" evidence="4">
    <location>
        <begin position="21"/>
        <end position="44"/>
    </location>
</feature>
<feature type="peptide" id="PRO_0000010546" description="Cholecystokinin-58" evidence="4">
    <location>
        <begin position="46"/>
        <end position="103"/>
    </location>
</feature>
<feature type="peptide" id="PRO_0000306309" description="Cholecystokinin-58 desnonopeptide" evidence="4">
    <location>
        <begin position="46"/>
        <end position="94"/>
    </location>
</feature>
<feature type="peptide" id="PRO_0000010547" description="Cholecystokinin-39" evidence="4">
    <location>
        <begin position="65"/>
        <end position="103"/>
    </location>
</feature>
<feature type="peptide" id="PRO_0000010548" description="Cholecystokinin-33" evidence="4">
    <location>
        <begin position="71"/>
        <end position="103"/>
    </location>
</feature>
<feature type="peptide" id="PRO_0000306310" description="Cholecystokinin-25" evidence="4">
    <location>
        <begin position="79"/>
        <end position="103"/>
    </location>
</feature>
<feature type="peptide" id="PRO_0000306311" description="Cholecystokinin-18" evidence="4">
    <location>
        <begin position="86"/>
        <end position="103"/>
    </location>
</feature>
<feature type="peptide" id="PRO_0000010549" description="Cholecystokinin-12" evidence="2">
    <location>
        <begin position="92"/>
        <end position="103"/>
    </location>
</feature>
<feature type="peptide" id="PRO_0000010550" description="Cholecystokinin-8" evidence="4">
    <location>
        <begin position="96"/>
        <end position="103"/>
    </location>
</feature>
<feature type="peptide" id="PRO_0000306312" description="Cholecystokinin-7" evidence="4">
    <location>
        <begin position="97"/>
        <end position="103"/>
    </location>
</feature>
<feature type="peptide" id="PRO_0000306313" description="Cholecystokinin-5" evidence="4">
    <location>
        <begin position="99"/>
        <end position="103"/>
    </location>
</feature>
<feature type="propeptide" id="PRO_0000010551">
    <location>
        <begin position="107"/>
        <end position="115"/>
    </location>
</feature>
<feature type="region of interest" description="Disordered" evidence="6">
    <location>
        <begin position="21"/>
        <end position="51"/>
    </location>
</feature>
<feature type="modified residue" description="Sulfotyrosine" evidence="4">
    <location>
        <position position="97"/>
    </location>
</feature>
<feature type="modified residue" description="Phenylalanine amide" evidence="3">
    <location>
        <position position="103"/>
    </location>
</feature>
<feature type="modified residue" description="Sulfotyrosine" evidence="1">
    <location>
        <position position="111"/>
    </location>
</feature>
<feature type="modified residue" description="Sulfotyrosine" evidence="1">
    <location>
        <position position="113"/>
    </location>
</feature>
<feature type="glycosylation site" description="O-linked (Xyl...) (chondroitin sulfate) serine" evidence="3">
    <location>
        <position position="31"/>
    </location>
</feature>
<reference key="1">
    <citation type="journal article" date="1990" name="J. Neurosci. Res.">
        <title>Patterns of cerebral cortex mRNA expression.</title>
        <authorList>
            <person name="Bernal J."/>
            <person name="Godbout M."/>
            <person name="Hasel K.W."/>
            <person name="Travis G.H."/>
            <person name="Sutcliffe J.G."/>
        </authorList>
    </citation>
    <scope>NUCLEOTIDE SEQUENCE [MRNA]</scope>
</reference>
<reference key="2">
    <citation type="submission" date="2005-06" db="EMBL/GenBank/DDBJ databases">
        <title>DNA sequences of macaque genes expressed in brain or testis and its evolutionary implications.</title>
        <authorList>
            <consortium name="International consortium for macaque cDNA sequencing and analysis"/>
        </authorList>
    </citation>
    <scope>NUCLEOTIDE SEQUENCE [LARGE SCALE MRNA]</scope>
    <source>
        <tissue>Brain cortex</tissue>
    </source>
</reference>
<comment type="function">
    <text evidence="4">This peptide hormone induces gall bladder contraction and the release of pancreatic enzymes in the gut. Its function in the brain is not clear. Binding to CCK-A receptors stimulates amylase release from the pancreas, binding to CCK-B receptors stimulates gastric acid secretion.</text>
</comment>
<comment type="subunit">
    <text evidence="4">Binds to CCK-A receptors in the pancreas and CCK-B receptors in the brain.</text>
</comment>
<comment type="subcellular location">
    <subcellularLocation>
        <location evidence="3">Secreted</location>
    </subcellularLocation>
</comment>
<comment type="PTM">
    <text>The precursor is cleaved by proteases to produce a number of active cholecystokinins.</text>
</comment>
<comment type="PTM">
    <molecule>Cholecystokinin-5</molecule>
    <text evidence="3">The precursor is cleaved by ACE, which removes the Gly-Arg-Arg peptide at the C-terminus, leading to mature hormone.</text>
</comment>
<comment type="similarity">
    <text evidence="7">Belongs to the gastrin/cholecystokinin family.</text>
</comment>
<keyword id="KW-0027">Amidation</keyword>
<keyword id="KW-0165">Cleavage on pair of basic residues</keyword>
<keyword id="KW-0325">Glycoprotein</keyword>
<keyword id="KW-0372">Hormone</keyword>
<keyword id="KW-0654">Proteoglycan</keyword>
<keyword id="KW-1185">Reference proteome</keyword>
<keyword id="KW-0964">Secreted</keyword>
<keyword id="KW-0732">Signal</keyword>
<keyword id="KW-0765">Sulfation</keyword>
<dbReference type="EMBL" id="M60458">
    <property type="protein sequence ID" value="AAA36837.1"/>
    <property type="molecule type" value="mRNA"/>
</dbReference>
<dbReference type="EMBL" id="AB169511">
    <property type="protein sequence ID" value="BAE01593.1"/>
    <property type="molecule type" value="mRNA"/>
</dbReference>
<dbReference type="PIR" id="A48318">
    <property type="entry name" value="A48318"/>
</dbReference>
<dbReference type="STRING" id="9541.ENSMFAP00000004911"/>
<dbReference type="eggNOG" id="ENOG502S472">
    <property type="taxonomic scope" value="Eukaryota"/>
</dbReference>
<dbReference type="Proteomes" id="UP000233100">
    <property type="component" value="Unplaced"/>
</dbReference>
<dbReference type="GO" id="GO:0030424">
    <property type="term" value="C:axon"/>
    <property type="evidence" value="ECO:0000250"/>
    <property type="project" value="UniProtKB"/>
</dbReference>
<dbReference type="GO" id="GO:0005615">
    <property type="term" value="C:extracellular space"/>
    <property type="evidence" value="ECO:0007669"/>
    <property type="project" value="TreeGrafter"/>
</dbReference>
<dbReference type="GO" id="GO:0005184">
    <property type="term" value="F:neuropeptide hormone activity"/>
    <property type="evidence" value="ECO:0000250"/>
    <property type="project" value="UniProtKB"/>
</dbReference>
<dbReference type="GO" id="GO:0007409">
    <property type="term" value="P:axonogenesis"/>
    <property type="evidence" value="ECO:0000250"/>
    <property type="project" value="UniProtKB"/>
</dbReference>
<dbReference type="GO" id="GO:0007586">
    <property type="term" value="P:digestion"/>
    <property type="evidence" value="ECO:0007669"/>
    <property type="project" value="InterPro"/>
</dbReference>
<dbReference type="GO" id="GO:0042755">
    <property type="term" value="P:eating behavior"/>
    <property type="evidence" value="ECO:0000250"/>
    <property type="project" value="UniProtKB"/>
</dbReference>
<dbReference type="GO" id="GO:0001764">
    <property type="term" value="P:neuron migration"/>
    <property type="evidence" value="ECO:0000250"/>
    <property type="project" value="UniProtKB"/>
</dbReference>
<dbReference type="InterPro" id="IPR015499">
    <property type="entry name" value="CCK-like"/>
</dbReference>
<dbReference type="InterPro" id="IPR001651">
    <property type="entry name" value="Gastrin/CCK"/>
</dbReference>
<dbReference type="InterPro" id="IPR013152">
    <property type="entry name" value="Gastrin/cholecystokinin_CS"/>
</dbReference>
<dbReference type="PANTHER" id="PTHR10786">
    <property type="entry name" value="CHOLECYSTOKININ"/>
    <property type="match status" value="1"/>
</dbReference>
<dbReference type="PANTHER" id="PTHR10786:SF0">
    <property type="entry name" value="CHOLECYSTOKININ"/>
    <property type="match status" value="1"/>
</dbReference>
<dbReference type="Pfam" id="PF00918">
    <property type="entry name" value="Gastrin"/>
    <property type="match status" value="1"/>
</dbReference>
<dbReference type="SMART" id="SM00029">
    <property type="entry name" value="GASTRIN"/>
    <property type="match status" value="1"/>
</dbReference>
<dbReference type="PROSITE" id="PS00259">
    <property type="entry name" value="GASTRIN"/>
    <property type="match status" value="1"/>
</dbReference>
<organism>
    <name type="scientific">Macaca fascicularis</name>
    <name type="common">Crab-eating macaque</name>
    <name type="synonym">Cynomolgus monkey</name>
    <dbReference type="NCBI Taxonomy" id="9541"/>
    <lineage>
        <taxon>Eukaryota</taxon>
        <taxon>Metazoa</taxon>
        <taxon>Chordata</taxon>
        <taxon>Craniata</taxon>
        <taxon>Vertebrata</taxon>
        <taxon>Euteleostomi</taxon>
        <taxon>Mammalia</taxon>
        <taxon>Eutheria</taxon>
        <taxon>Euarchontoglires</taxon>
        <taxon>Primates</taxon>
        <taxon>Haplorrhini</taxon>
        <taxon>Catarrhini</taxon>
        <taxon>Cercopithecidae</taxon>
        <taxon>Cercopithecinae</taxon>
        <taxon>Macaca</taxon>
    </lineage>
</organism>
<sequence length="115" mass="12665">MNSGVSLCVLMAVLAAGALTQPVPPAEPAGSGLQRAEEAPRRQLRAVQRTDGESRAHLGALLARYIQQARKAPSGRMSIIKNLQNLDPSHRISDRDYMGWMDFGRRSAEEYEYPS</sequence>
<proteinExistence type="inferred from homology"/>
<gene>
    <name type="primary">CCK</name>
    <name type="ORF">QccE-12659</name>
</gene>